<name>MSC3_KLULA</name>
<evidence type="ECO:0000250" key="1"/>
<evidence type="ECO:0000256" key="2">
    <source>
        <dbReference type="SAM" id="MobiDB-lite"/>
    </source>
</evidence>
<comment type="function">
    <text evidence="1">May be involved in the control of meiotic sister-chromatid recombination.</text>
</comment>
<comment type="subcellular location">
    <subcellularLocation>
        <location>Cell membrane</location>
        <topology>Peripheral membrane protein</topology>
    </subcellularLocation>
    <text evidence="1">Cell periphery.</text>
</comment>
<reference key="1">
    <citation type="journal article" date="2004" name="Nature">
        <title>Genome evolution in yeasts.</title>
        <authorList>
            <person name="Dujon B."/>
            <person name="Sherman D."/>
            <person name="Fischer G."/>
            <person name="Durrens P."/>
            <person name="Casaregola S."/>
            <person name="Lafontaine I."/>
            <person name="de Montigny J."/>
            <person name="Marck C."/>
            <person name="Neuveglise C."/>
            <person name="Talla E."/>
            <person name="Goffard N."/>
            <person name="Frangeul L."/>
            <person name="Aigle M."/>
            <person name="Anthouard V."/>
            <person name="Babour A."/>
            <person name="Barbe V."/>
            <person name="Barnay S."/>
            <person name="Blanchin S."/>
            <person name="Beckerich J.-M."/>
            <person name="Beyne E."/>
            <person name="Bleykasten C."/>
            <person name="Boisrame A."/>
            <person name="Boyer J."/>
            <person name="Cattolico L."/>
            <person name="Confanioleri F."/>
            <person name="de Daruvar A."/>
            <person name="Despons L."/>
            <person name="Fabre E."/>
            <person name="Fairhead C."/>
            <person name="Ferry-Dumazet H."/>
            <person name="Groppi A."/>
            <person name="Hantraye F."/>
            <person name="Hennequin C."/>
            <person name="Jauniaux N."/>
            <person name="Joyet P."/>
            <person name="Kachouri R."/>
            <person name="Kerrest A."/>
            <person name="Koszul R."/>
            <person name="Lemaire M."/>
            <person name="Lesur I."/>
            <person name="Ma L."/>
            <person name="Muller H."/>
            <person name="Nicaud J.-M."/>
            <person name="Nikolski M."/>
            <person name="Oztas S."/>
            <person name="Ozier-Kalogeropoulos O."/>
            <person name="Pellenz S."/>
            <person name="Potier S."/>
            <person name="Richard G.-F."/>
            <person name="Straub M.-L."/>
            <person name="Suleau A."/>
            <person name="Swennen D."/>
            <person name="Tekaia F."/>
            <person name="Wesolowski-Louvel M."/>
            <person name="Westhof E."/>
            <person name="Wirth B."/>
            <person name="Zeniou-Meyer M."/>
            <person name="Zivanovic Y."/>
            <person name="Bolotin-Fukuhara M."/>
            <person name="Thierry A."/>
            <person name="Bouchier C."/>
            <person name="Caudron B."/>
            <person name="Scarpelli C."/>
            <person name="Gaillardin C."/>
            <person name="Weissenbach J."/>
            <person name="Wincker P."/>
            <person name="Souciet J.-L."/>
        </authorList>
    </citation>
    <scope>NUCLEOTIDE SEQUENCE [LARGE SCALE GENOMIC DNA]</scope>
    <source>
        <strain>ATCC 8585 / CBS 2359 / DSM 70799 / NBRC 1267 / NRRL Y-1140 / WM37</strain>
    </source>
</reference>
<protein>
    <recommendedName>
        <fullName>Meiotic sister-chromatid recombination protein 3</fullName>
    </recommendedName>
</protein>
<organism>
    <name type="scientific">Kluyveromyces lactis (strain ATCC 8585 / CBS 2359 / DSM 70799 / NBRC 1267 / NRRL Y-1140 / WM37)</name>
    <name type="common">Yeast</name>
    <name type="synonym">Candida sphaerica</name>
    <dbReference type="NCBI Taxonomy" id="284590"/>
    <lineage>
        <taxon>Eukaryota</taxon>
        <taxon>Fungi</taxon>
        <taxon>Dikarya</taxon>
        <taxon>Ascomycota</taxon>
        <taxon>Saccharomycotina</taxon>
        <taxon>Saccharomycetes</taxon>
        <taxon>Saccharomycetales</taxon>
        <taxon>Saccharomycetaceae</taxon>
        <taxon>Kluyveromyces</taxon>
    </lineage>
</organism>
<dbReference type="EMBL" id="CR382126">
    <property type="protein sequence ID" value="CAG98389.1"/>
    <property type="molecule type" value="Genomic_DNA"/>
</dbReference>
<dbReference type="RefSeq" id="XP_455681.1">
    <property type="nucleotide sequence ID" value="XM_455681.1"/>
</dbReference>
<dbReference type="FunCoup" id="Q6CK58">
    <property type="interactions" value="72"/>
</dbReference>
<dbReference type="STRING" id="284590.Q6CK58"/>
<dbReference type="PaxDb" id="284590-Q6CK58"/>
<dbReference type="KEGG" id="kla:KLLA0_F13354g"/>
<dbReference type="eggNOG" id="ENOG502RZHH">
    <property type="taxonomic scope" value="Eukaryota"/>
</dbReference>
<dbReference type="HOGENOM" id="CLU_487610_0_0_1"/>
<dbReference type="InParanoid" id="Q6CK58"/>
<dbReference type="OMA" id="QENYGYQ"/>
<dbReference type="Proteomes" id="UP000000598">
    <property type="component" value="Chromosome F"/>
</dbReference>
<dbReference type="GO" id="GO:0005886">
    <property type="term" value="C:plasma membrane"/>
    <property type="evidence" value="ECO:0007669"/>
    <property type="project" value="UniProtKB-SubCell"/>
</dbReference>
<dbReference type="GO" id="GO:0006310">
    <property type="term" value="P:DNA recombination"/>
    <property type="evidence" value="ECO:0007669"/>
    <property type="project" value="UniProtKB-KW"/>
</dbReference>
<dbReference type="GO" id="GO:0051321">
    <property type="term" value="P:meiotic cell cycle"/>
    <property type="evidence" value="ECO:0007669"/>
    <property type="project" value="UniProtKB-KW"/>
</dbReference>
<sequence length="652" mass="71450">MVFGMNLGNRRKATRVPDLSRYDYHYNGSGGNSVNQGDNYLKSHELSADAAFAASARAGSLVNYPERGYTNISRANSLRMGHPGQQQQQSSYIPRSYSFTARGAYAPRTGNVGNRRSVSAIPRTGTASSRGVGSRTGSMTGSVARVGSRTGSFAGGGNGSIIIKTQEVKDMMGRTQSITTQTIRRINGMEYVETTTQTAGLVEDPQFHFQQFAENDEFPISDELSATPPAAPLSESQPRTNQRLANFNSNAINNSAANNIRSDSEEEGEEHFTDASDVVEESGAFAEDDQDHFLAKVNKVDVDNNSKSYTSRKPLVQKQGVQQQQEVQHQGISQVQNTEAKSVGRKSTMSKRMTLRDTPNAQLEPEKDTTDQATPDNNATKRKSIFKSKKRNEAVAVPTVPTSDQKTLSQEEMYAIALEIAQQKYGHPTKTVSHSTDNGSRNEMTPILEDADVEQPHVLPTTLHLPTREEQIQHEQLQQPTAAIPTNEKSRHPKKKVKSILDRVVQFSQENSGNQPPKQHRGKQYSQQPPDVAPSNGTTDNFDTNASGHNINHNNNNHNNNNNTSSSSSLRHESGANPVVVTEDTTVLAASTAATPVDVNEPGNPDHVIPASSPSIDNTPRINEKTKSKKKNEKGSFFKRLFKSNKTHINTK</sequence>
<proteinExistence type="inferred from homology"/>
<keyword id="KW-1003">Cell membrane</keyword>
<keyword id="KW-0233">DNA recombination</keyword>
<keyword id="KW-0469">Meiosis</keyword>
<keyword id="KW-0472">Membrane</keyword>
<keyword id="KW-1185">Reference proteome</keyword>
<feature type="chain" id="PRO_0000096594" description="Meiotic sister-chromatid recombination protein 3">
    <location>
        <begin position="1"/>
        <end position="652"/>
    </location>
</feature>
<feature type="region of interest" description="Disordered" evidence="2">
    <location>
        <begin position="123"/>
        <end position="151"/>
    </location>
</feature>
<feature type="region of interest" description="Disordered" evidence="2">
    <location>
        <begin position="304"/>
        <end position="406"/>
    </location>
</feature>
<feature type="region of interest" description="Disordered" evidence="2">
    <location>
        <begin position="470"/>
        <end position="576"/>
    </location>
</feature>
<feature type="region of interest" description="Disordered" evidence="2">
    <location>
        <begin position="594"/>
        <end position="652"/>
    </location>
</feature>
<feature type="compositionally biased region" description="Polar residues" evidence="2">
    <location>
        <begin position="125"/>
        <end position="141"/>
    </location>
</feature>
<feature type="compositionally biased region" description="Low complexity" evidence="2">
    <location>
        <begin position="316"/>
        <end position="336"/>
    </location>
</feature>
<feature type="compositionally biased region" description="Polar residues" evidence="2">
    <location>
        <begin position="337"/>
        <end position="361"/>
    </location>
</feature>
<feature type="compositionally biased region" description="Basic residues" evidence="2">
    <location>
        <begin position="380"/>
        <end position="390"/>
    </location>
</feature>
<feature type="compositionally biased region" description="Polar residues" evidence="2">
    <location>
        <begin position="506"/>
        <end position="517"/>
    </location>
</feature>
<feature type="compositionally biased region" description="Polar residues" evidence="2">
    <location>
        <begin position="524"/>
        <end position="544"/>
    </location>
</feature>
<feature type="compositionally biased region" description="Low complexity" evidence="2">
    <location>
        <begin position="545"/>
        <end position="569"/>
    </location>
</feature>
<feature type="compositionally biased region" description="Polar residues" evidence="2">
    <location>
        <begin position="612"/>
        <end position="621"/>
    </location>
</feature>
<feature type="compositionally biased region" description="Basic residues" evidence="2">
    <location>
        <begin position="640"/>
        <end position="652"/>
    </location>
</feature>
<gene>
    <name type="primary">MSC3</name>
    <name type="ordered locus">KLLA0F13354g</name>
</gene>
<accession>Q6CK58</accession>